<protein>
    <recommendedName>
        <fullName evidence="1">ATP-dependent Clp protease adapter protein ClpS</fullName>
    </recommendedName>
</protein>
<dbReference type="EMBL" id="CP000388">
    <property type="protein sequence ID" value="ABG40891.1"/>
    <property type="molecule type" value="Genomic_DNA"/>
</dbReference>
<dbReference type="RefSeq" id="WP_006990871.1">
    <property type="nucleotide sequence ID" value="NC_008228.1"/>
</dbReference>
<dbReference type="SMR" id="Q15T97"/>
<dbReference type="STRING" id="342610.Patl_2375"/>
<dbReference type="KEGG" id="pat:Patl_2375"/>
<dbReference type="eggNOG" id="COG2127">
    <property type="taxonomic scope" value="Bacteria"/>
</dbReference>
<dbReference type="HOGENOM" id="CLU_134358_2_1_6"/>
<dbReference type="OrthoDB" id="9796121at2"/>
<dbReference type="Proteomes" id="UP000001981">
    <property type="component" value="Chromosome"/>
</dbReference>
<dbReference type="GO" id="GO:0030163">
    <property type="term" value="P:protein catabolic process"/>
    <property type="evidence" value="ECO:0007669"/>
    <property type="project" value="InterPro"/>
</dbReference>
<dbReference type="GO" id="GO:0006508">
    <property type="term" value="P:proteolysis"/>
    <property type="evidence" value="ECO:0007669"/>
    <property type="project" value="UniProtKB-UniRule"/>
</dbReference>
<dbReference type="FunFam" id="3.30.1390.10:FF:000002">
    <property type="entry name" value="ATP-dependent Clp protease adapter protein ClpS"/>
    <property type="match status" value="1"/>
</dbReference>
<dbReference type="Gene3D" id="3.30.1390.10">
    <property type="match status" value="1"/>
</dbReference>
<dbReference type="HAMAP" id="MF_00302">
    <property type="entry name" value="ClpS"/>
    <property type="match status" value="1"/>
</dbReference>
<dbReference type="InterPro" id="IPR022935">
    <property type="entry name" value="ClpS"/>
</dbReference>
<dbReference type="InterPro" id="IPR003769">
    <property type="entry name" value="ClpS_core"/>
</dbReference>
<dbReference type="InterPro" id="IPR014719">
    <property type="entry name" value="Ribosomal_bL12_C/ClpS-like"/>
</dbReference>
<dbReference type="NCBIfam" id="NF000670">
    <property type="entry name" value="PRK00033.1-3"/>
    <property type="match status" value="1"/>
</dbReference>
<dbReference type="NCBIfam" id="NF000672">
    <property type="entry name" value="PRK00033.1-5"/>
    <property type="match status" value="1"/>
</dbReference>
<dbReference type="PANTHER" id="PTHR33473:SF19">
    <property type="entry name" value="ATP-DEPENDENT CLP PROTEASE ADAPTER PROTEIN CLPS"/>
    <property type="match status" value="1"/>
</dbReference>
<dbReference type="PANTHER" id="PTHR33473">
    <property type="entry name" value="ATP-DEPENDENT CLP PROTEASE ADAPTER PROTEIN CLPS1, CHLOROPLASTIC"/>
    <property type="match status" value="1"/>
</dbReference>
<dbReference type="Pfam" id="PF02617">
    <property type="entry name" value="ClpS"/>
    <property type="match status" value="1"/>
</dbReference>
<dbReference type="SUPFAM" id="SSF54736">
    <property type="entry name" value="ClpS-like"/>
    <property type="match status" value="1"/>
</dbReference>
<accession>Q15T97</accession>
<comment type="function">
    <text evidence="1">Involved in the modulation of the specificity of the ClpAP-mediated ATP-dependent protein degradation.</text>
</comment>
<comment type="subunit">
    <text evidence="1">Binds to the N-terminal domain of the chaperone ClpA.</text>
</comment>
<comment type="similarity">
    <text evidence="1">Belongs to the ClpS family.</text>
</comment>
<reference key="1">
    <citation type="submission" date="2006-06" db="EMBL/GenBank/DDBJ databases">
        <title>Complete sequence of Pseudoalteromonas atlantica T6c.</title>
        <authorList>
            <consortium name="US DOE Joint Genome Institute"/>
            <person name="Copeland A."/>
            <person name="Lucas S."/>
            <person name="Lapidus A."/>
            <person name="Barry K."/>
            <person name="Detter J.C."/>
            <person name="Glavina del Rio T."/>
            <person name="Hammon N."/>
            <person name="Israni S."/>
            <person name="Dalin E."/>
            <person name="Tice H."/>
            <person name="Pitluck S."/>
            <person name="Saunders E."/>
            <person name="Brettin T."/>
            <person name="Bruce D."/>
            <person name="Han C."/>
            <person name="Tapia R."/>
            <person name="Gilna P."/>
            <person name="Schmutz J."/>
            <person name="Larimer F."/>
            <person name="Land M."/>
            <person name="Hauser L."/>
            <person name="Kyrpides N."/>
            <person name="Kim E."/>
            <person name="Karls A.C."/>
            <person name="Bartlett D."/>
            <person name="Higgins B.P."/>
            <person name="Richardson P."/>
        </authorList>
    </citation>
    <scope>NUCLEOTIDE SEQUENCE [LARGE SCALE GENOMIC DNA]</scope>
    <source>
        <strain>T6c / ATCC BAA-1087</strain>
    </source>
</reference>
<evidence type="ECO:0000255" key="1">
    <source>
        <dbReference type="HAMAP-Rule" id="MF_00302"/>
    </source>
</evidence>
<feature type="chain" id="PRO_0000300716" description="ATP-dependent Clp protease adapter protein ClpS">
    <location>
        <begin position="1"/>
        <end position="106"/>
    </location>
</feature>
<proteinExistence type="inferred from homology"/>
<gene>
    <name evidence="1" type="primary">clpS</name>
    <name type="ordered locus">Patl_2375</name>
</gene>
<name>CLPS_PSEA6</name>
<organism>
    <name type="scientific">Pseudoalteromonas atlantica (strain T6c / ATCC BAA-1087)</name>
    <dbReference type="NCBI Taxonomy" id="3042615"/>
    <lineage>
        <taxon>Bacteria</taxon>
        <taxon>Pseudomonadati</taxon>
        <taxon>Pseudomonadota</taxon>
        <taxon>Gammaproteobacteria</taxon>
        <taxon>Alteromonadales</taxon>
        <taxon>Alteromonadaceae</taxon>
        <taxon>Paraglaciecola</taxon>
    </lineage>
</organism>
<sequence>MSKDNTINIEREKQLDTVKQKLAPPPMYKVLLNNDDYTPMDFVIEVLVRFFNLDSEKAHQIMLTVHYRGRAVCGVYTAEIAETKVMQVTQYAKKHQHPLMCTMEQV</sequence>